<gene>
    <name evidence="14" type="primary">cns4</name>
    <name type="ORF">CCM_04439</name>
</gene>
<protein>
    <recommendedName>
        <fullName evidence="14">ABC-type transporter cns4</fullName>
    </recommendedName>
    <alternativeName>
        <fullName evidence="14">Cordycepin biosynthesis cluster protein 4</fullName>
    </alternativeName>
</protein>
<accession>G3JF11</accession>
<dbReference type="EMBL" id="JH126401">
    <property type="protein sequence ID" value="EGX93067.1"/>
    <property type="molecule type" value="Genomic_DNA"/>
</dbReference>
<dbReference type="RefSeq" id="XP_006669650.1">
    <property type="nucleotide sequence ID" value="XM_006669587.1"/>
</dbReference>
<dbReference type="SMR" id="G3JF11"/>
<dbReference type="STRING" id="983644.G3JF11"/>
<dbReference type="GeneID" id="18166462"/>
<dbReference type="KEGG" id="cmt:CCM_04439"/>
<dbReference type="VEuPathDB" id="FungiDB:CCM_04439"/>
<dbReference type="eggNOG" id="KOG0065">
    <property type="taxonomic scope" value="Eukaryota"/>
</dbReference>
<dbReference type="HOGENOM" id="CLU_000604_35_0_1"/>
<dbReference type="InParanoid" id="G3JF11"/>
<dbReference type="OMA" id="QKNFAFF"/>
<dbReference type="OrthoDB" id="245989at2759"/>
<dbReference type="Proteomes" id="UP000001610">
    <property type="component" value="Unassembled WGS sequence"/>
</dbReference>
<dbReference type="GO" id="GO:0005886">
    <property type="term" value="C:plasma membrane"/>
    <property type="evidence" value="ECO:0007669"/>
    <property type="project" value="UniProtKB-SubCell"/>
</dbReference>
<dbReference type="GO" id="GO:0140359">
    <property type="term" value="F:ABC-type transporter activity"/>
    <property type="evidence" value="ECO:0007669"/>
    <property type="project" value="InterPro"/>
</dbReference>
<dbReference type="GO" id="GO:0005524">
    <property type="term" value="F:ATP binding"/>
    <property type="evidence" value="ECO:0007669"/>
    <property type="project" value="UniProtKB-KW"/>
</dbReference>
<dbReference type="GO" id="GO:0016887">
    <property type="term" value="F:ATP hydrolysis activity"/>
    <property type="evidence" value="ECO:0007669"/>
    <property type="project" value="InterPro"/>
</dbReference>
<dbReference type="CDD" id="cd03233">
    <property type="entry name" value="ABCG_PDR_domain1"/>
    <property type="match status" value="1"/>
</dbReference>
<dbReference type="CDD" id="cd03232">
    <property type="entry name" value="ABCG_PDR_domain2"/>
    <property type="match status" value="1"/>
</dbReference>
<dbReference type="FunFam" id="3.40.50.300:FF:001465">
    <property type="entry name" value="ABC multidrug transporter (Eurofung)"/>
    <property type="match status" value="1"/>
</dbReference>
<dbReference type="FunFam" id="3.40.50.300:FF:000054">
    <property type="entry name" value="ABC multidrug transporter atrF"/>
    <property type="match status" value="1"/>
</dbReference>
<dbReference type="Gene3D" id="3.40.50.300">
    <property type="entry name" value="P-loop containing nucleotide triphosphate hydrolases"/>
    <property type="match status" value="2"/>
</dbReference>
<dbReference type="InterPro" id="IPR003593">
    <property type="entry name" value="AAA+_ATPase"/>
</dbReference>
<dbReference type="InterPro" id="IPR013525">
    <property type="entry name" value="ABC2_TM"/>
</dbReference>
<dbReference type="InterPro" id="IPR003439">
    <property type="entry name" value="ABC_transporter-like_ATP-bd"/>
</dbReference>
<dbReference type="InterPro" id="IPR017871">
    <property type="entry name" value="ABC_transporter-like_CS"/>
</dbReference>
<dbReference type="InterPro" id="IPR043926">
    <property type="entry name" value="ABCG_dom"/>
</dbReference>
<dbReference type="InterPro" id="IPR034001">
    <property type="entry name" value="ABCG_PDR_1"/>
</dbReference>
<dbReference type="InterPro" id="IPR034003">
    <property type="entry name" value="ABCG_PDR_2"/>
</dbReference>
<dbReference type="InterPro" id="IPR027417">
    <property type="entry name" value="P-loop_NTPase"/>
</dbReference>
<dbReference type="InterPro" id="IPR010929">
    <property type="entry name" value="PDR_CDR_ABC"/>
</dbReference>
<dbReference type="PANTHER" id="PTHR19241">
    <property type="entry name" value="ATP-BINDING CASSETTE TRANSPORTER"/>
    <property type="match status" value="1"/>
</dbReference>
<dbReference type="Pfam" id="PF01061">
    <property type="entry name" value="ABC2_membrane"/>
    <property type="match status" value="2"/>
</dbReference>
<dbReference type="Pfam" id="PF19055">
    <property type="entry name" value="ABC2_membrane_7"/>
    <property type="match status" value="1"/>
</dbReference>
<dbReference type="Pfam" id="PF00005">
    <property type="entry name" value="ABC_tran"/>
    <property type="match status" value="2"/>
</dbReference>
<dbReference type="Pfam" id="PF06422">
    <property type="entry name" value="PDR_CDR"/>
    <property type="match status" value="1"/>
</dbReference>
<dbReference type="SMART" id="SM00382">
    <property type="entry name" value="AAA"/>
    <property type="match status" value="2"/>
</dbReference>
<dbReference type="SUPFAM" id="SSF52540">
    <property type="entry name" value="P-loop containing nucleoside triphosphate hydrolases"/>
    <property type="match status" value="2"/>
</dbReference>
<dbReference type="PROSITE" id="PS00211">
    <property type="entry name" value="ABC_TRANSPORTER_1"/>
    <property type="match status" value="1"/>
</dbReference>
<dbReference type="PROSITE" id="PS50893">
    <property type="entry name" value="ABC_TRANSPORTER_2"/>
    <property type="match status" value="2"/>
</dbReference>
<reference key="1">
    <citation type="journal article" date="2011" name="Genome Biol.">
        <title>Genome sequence of the insect pathogenic fungus Cordyceps militaris, a valued traditional Chinese medicine.</title>
        <authorList>
            <person name="Zheng P."/>
            <person name="Xia Y."/>
            <person name="Xiao G."/>
            <person name="Xiong C."/>
            <person name="Hu X."/>
            <person name="Zhang S."/>
            <person name="Zheng H."/>
            <person name="Huang Y."/>
            <person name="Zhou Y."/>
            <person name="Wang S."/>
            <person name="Zhao G.-P."/>
            <person name="Liu X."/>
            <person name="St Leger R.J."/>
            <person name="Wang C."/>
        </authorList>
    </citation>
    <scope>NUCLEOTIDE SEQUENCE [LARGE SCALE GENOMIC DNA]</scope>
    <source>
        <strain>CM01</strain>
    </source>
</reference>
<reference key="2">
    <citation type="journal article" date="1998" name="Antimicrob. Agents Chemother.">
        <title>Antifungal activity of 3'-deoxyadenosine (cordycepin).</title>
        <authorList>
            <person name="Sugar A.M."/>
            <person name="McCaffrey R.P."/>
        </authorList>
    </citation>
    <scope>BIOTECHNOLOGY</scope>
</reference>
<reference key="3">
    <citation type="journal article" date="2017" name="Cell Chem. Biol.">
        <title>Fungal Cordycepin Biosynthesis Is Coupled with the Production of the Safeguard Molecule Pentostatin.</title>
        <authorList>
            <person name="Xia Y."/>
            <person name="Luo F."/>
            <person name="Shang Y."/>
            <person name="Chen P."/>
            <person name="Lu Y."/>
            <person name="Wang C."/>
        </authorList>
    </citation>
    <scope>FUNCTION</scope>
    <scope>DISRUPTION PHENOTYPE</scope>
</reference>
<reference key="4">
    <citation type="journal article" date="2018" name="Cell. Death. Discov.">
        <title>Cordycepin induces apoptosis of human ovarian cancer cells by inhibiting CCL5-mediated Akt/NF-kappaB signaling pathway.</title>
        <authorList>
            <person name="Cui Z.Y."/>
            <person name="Park S.J."/>
            <person name="Jo E."/>
            <person name="Hwang I.H."/>
            <person name="Lee K.B."/>
            <person name="Kim S.W."/>
            <person name="Kim D.J."/>
            <person name="Joo J.C."/>
            <person name="Hong S.H."/>
            <person name="Lee M.G."/>
            <person name="Jang I.S."/>
        </authorList>
    </citation>
    <scope>BIOTECHNOLOGY</scope>
</reference>
<reference key="5">
    <citation type="journal article" date="2019" name="J. Cancer">
        <title>Cordycepin Induces Apoptosis and G2/M Phase Arrest through the ERK Pathways in Esophageal Cancer Cells.</title>
        <authorList>
            <person name="Xu J.C."/>
            <person name="Zhou X.P."/>
            <person name="Wang X.A."/>
            <person name="Xu M.D."/>
            <person name="Chen T."/>
            <person name="Chen T.Y."/>
            <person name="Zhou P.H."/>
            <person name="Zhang Y.Q."/>
        </authorList>
    </citation>
    <scope>BIOTECHNOLOGY</scope>
</reference>
<reference key="6">
    <citation type="journal article" date="2019" name="J. Microbiol.">
        <title>Antimicrobial effect and proposed action mechanism of cordycepin against Escherichia coli and Bacillus subtilis.</title>
        <authorList>
            <person name="Jiang Q."/>
            <person name="Lou Z."/>
            <person name="Wang H."/>
            <person name="Chen C."/>
        </authorList>
    </citation>
    <scope>BIOTECHNOLOGY</scope>
</reference>
<reference key="7">
    <citation type="journal article" date="2020" name="Immunopharmacol. Immunotoxicol.">
        <title>Cordycepin exhibits a suppressive effect on T cells through inhibiting TCR signaling cascade in CFA-induced inflammation mice model.</title>
        <authorList>
            <person name="Wang X."/>
            <person name="Xi D."/>
            <person name="Mo J."/>
            <person name="Wang K."/>
            <person name="Luo Y."/>
            <person name="Xia E."/>
            <person name="Huang R."/>
            <person name="Luo S."/>
            <person name="Wei J."/>
            <person name="Ren Z."/>
            <person name="Pang H."/>
            <person name="Yang R."/>
        </authorList>
    </citation>
    <scope>BIOTECHNOLOGY</scope>
</reference>
<reference key="8">
    <citation type="journal article" date="2022" name="J. Biomol. Struct. Dyn.">
        <title>Cordycepin: a bioactive metabolite of Cordyceps militaris and polyadenylation inhibitor with therapeutic potential against COVID-19.</title>
        <authorList>
            <person name="Verma A.K."/>
        </authorList>
    </citation>
    <scope>BIOTECHNOLOGY</scope>
</reference>
<reference key="9">
    <citation type="journal article" date="2023" name="Int. Microbiol.">
        <title>A novel complementary pathway of cordycepin biosynthesis in Cordyceps militaris.</title>
        <authorList>
            <person name="Zhang H."/>
            <person name="Yang J."/>
            <person name="Luo S."/>
            <person name="Liu L."/>
            <person name="Yang G."/>
            <person name="Gao B."/>
            <person name="Fan H."/>
            <person name="Deng L."/>
            <person name="Yang M."/>
        </authorList>
    </citation>
    <scope>FUNCTION</scope>
</reference>
<reference key="10">
    <citation type="journal article" date="2024" name="Genes (Basel)">
        <title>Genomic and Transcriptome Analysis Reveals the Biosynthesis Network of Cordycepin in Cordyceps militaris.</title>
        <authorList>
            <person name="Chai L."/>
            <person name="Li J."/>
            <person name="Guo L."/>
            <person name="Zhang S."/>
            <person name="Chen F."/>
            <person name="Zhu W."/>
            <person name="Li Y."/>
        </authorList>
    </citation>
    <scope>INDUCTION</scope>
</reference>
<feature type="chain" id="PRO_0000460183" description="ABC-type transporter cns4">
    <location>
        <begin position="1"/>
        <end position="1364"/>
    </location>
</feature>
<feature type="transmembrane region" description="Helical" evidence="1">
    <location>
        <begin position="435"/>
        <end position="455"/>
    </location>
</feature>
<feature type="transmembrane region" description="Helical" evidence="1">
    <location>
        <begin position="483"/>
        <end position="503"/>
    </location>
</feature>
<feature type="transmembrane region" description="Helical" evidence="1">
    <location>
        <begin position="508"/>
        <end position="528"/>
    </location>
</feature>
<feature type="transmembrane region" description="Helical" evidence="1">
    <location>
        <begin position="540"/>
        <end position="560"/>
    </location>
</feature>
<feature type="transmembrane region" description="Helical" evidence="1">
    <location>
        <begin position="567"/>
        <end position="587"/>
    </location>
</feature>
<feature type="transmembrane region" description="Helical" evidence="1">
    <location>
        <begin position="650"/>
        <end position="670"/>
    </location>
</feature>
<feature type="transmembrane region" description="Helical" evidence="1">
    <location>
        <begin position="1076"/>
        <end position="1094"/>
    </location>
</feature>
<feature type="transmembrane region" description="Helical" evidence="1">
    <location>
        <begin position="1105"/>
        <end position="1125"/>
    </location>
</feature>
<feature type="transmembrane region" description="Helical" evidence="1">
    <location>
        <begin position="1146"/>
        <end position="1166"/>
    </location>
</feature>
<feature type="transmembrane region" description="Helical" evidence="1">
    <location>
        <begin position="1185"/>
        <end position="1205"/>
    </location>
</feature>
<feature type="transmembrane region" description="Helical" evidence="1">
    <location>
        <begin position="1211"/>
        <end position="1231"/>
    </location>
</feature>
<feature type="transmembrane region" description="Helical" evidence="1">
    <location>
        <begin position="1245"/>
        <end position="1265"/>
    </location>
</feature>
<feature type="domain" description="ABC transporter 1" evidence="2">
    <location>
        <begin position="42"/>
        <end position="290"/>
    </location>
</feature>
<feature type="domain" description="ABC transporter 2" evidence="2">
    <location>
        <begin position="737"/>
        <end position="985"/>
    </location>
</feature>
<feature type="region of interest" description="Disordered" evidence="4">
    <location>
        <begin position="697"/>
        <end position="732"/>
    </location>
</feature>
<feature type="binding site" evidence="2">
    <location>
        <begin position="779"/>
        <end position="786"/>
    </location>
    <ligand>
        <name>ATP</name>
        <dbReference type="ChEBI" id="CHEBI:30616"/>
    </ligand>
</feature>
<feature type="glycosylation site" description="N-linked (GlcNAc...) asparagine" evidence="3">
    <location>
        <position position="152"/>
    </location>
</feature>
<feature type="glycosylation site" description="N-linked (GlcNAc...) asparagine" evidence="3">
    <location>
        <position position="214"/>
    </location>
</feature>
<feature type="glycosylation site" description="N-linked (GlcNAc...) asparagine" evidence="3">
    <location>
        <position position="610"/>
    </location>
</feature>
<feature type="glycosylation site" description="N-linked (GlcNAc...) asparagine" evidence="3">
    <location>
        <position position="689"/>
    </location>
</feature>
<feature type="glycosylation site" description="N-linked (GlcNAc...) asparagine" evidence="3">
    <location>
        <position position="711"/>
    </location>
</feature>
<feature type="glycosylation site" description="N-linked (GlcNAc...) asparagine" evidence="3">
    <location>
        <position position="739"/>
    </location>
</feature>
<evidence type="ECO:0000255" key="1"/>
<evidence type="ECO:0000255" key="2">
    <source>
        <dbReference type="PROSITE-ProRule" id="PRU00434"/>
    </source>
</evidence>
<evidence type="ECO:0000255" key="3">
    <source>
        <dbReference type="PROSITE-ProRule" id="PRU00498"/>
    </source>
</evidence>
<evidence type="ECO:0000256" key="4">
    <source>
        <dbReference type="SAM" id="MobiDB-lite"/>
    </source>
</evidence>
<evidence type="ECO:0000269" key="5">
    <source>
    </source>
</evidence>
<evidence type="ECO:0000269" key="6">
    <source>
    </source>
</evidence>
<evidence type="ECO:0000269" key="7">
    <source>
    </source>
</evidence>
<evidence type="ECO:0000269" key="8">
    <source>
    </source>
</evidence>
<evidence type="ECO:0000269" key="9">
    <source>
    </source>
</evidence>
<evidence type="ECO:0000269" key="10">
    <source>
    </source>
</evidence>
<evidence type="ECO:0000269" key="11">
    <source>
    </source>
</evidence>
<evidence type="ECO:0000269" key="12">
    <source>
    </source>
</evidence>
<evidence type="ECO:0000269" key="13">
    <source>
    </source>
</evidence>
<evidence type="ECO:0000303" key="14">
    <source>
    </source>
</evidence>
<evidence type="ECO:0000305" key="15"/>
<evidence type="ECO:0000305" key="16">
    <source>
    </source>
</evidence>
<keyword id="KW-0067">ATP-binding</keyword>
<keyword id="KW-1003">Cell membrane</keyword>
<keyword id="KW-0325">Glycoprotein</keyword>
<keyword id="KW-0472">Membrane</keyword>
<keyword id="KW-0547">Nucleotide-binding</keyword>
<keyword id="KW-1185">Reference proteome</keyword>
<keyword id="KW-0812">Transmembrane</keyword>
<keyword id="KW-1133">Transmembrane helix</keyword>
<keyword id="KW-0813">Transport</keyword>
<name>CNS4_CORMM</name>
<sequence>MTEQQPDKEKRLGITWHDLTVKGIGKDAAFHENVASQFNIPSRVKESRAKPLLKTIVDNSHGCVKPGEMLLVLGRPGAGCTSLLKVLANRRLGYTKVTGEVWYGSMTADEAKQYRGQIVMNTEEELFFPTLTVQQTIDFATRMKVPHHLPTNLTNPEEFQKTNRDFLLRAMGIEHTGDTRVGNEFVRGVSGGERKRVSIIETMATRGSVFCWDNSTRGLDASTALEYVRCMRSMTDVLGLSSIVTLYQAGNGIYDLFDKVLVLDEGKQTFYGPMHQAKPFMEEMGFLYTDGANIADYLTSVTVPTERQVRPDMENRFPRNANELRSHYEKTQLKRTMALEYNYPNSPQAAEATKEFKEAVHLEKHPGLPAGSPLTVSFYTQVKSAIIRQYQLLWSDKATFLIPQCLNFVQALISGSLFYNAPHDSSGLAFKSGSLFFAVLLNALLSMSEVTGSFAARPVLAKHRGFALYHPAAYCFAQIAADIPLIAMQVTLFALPVYWMTGLKPTGEAFLTYWIITISVTMCMTALFRAIGAAFSSFDAAIKVTGFLMSALIMYTGFLIPKSRMHPWLGWIFWINPLAYGYEAVLSNEFHGQLIPCVNNNLVPNGPGYNNSEFQACAGIRGAPMGASVITGDQYLQGLSYSHAHVWRNFAIVWVWWALFVILTVYFTSNWSQVSGNSGYLVVPREKANKTMHTAVDEEVGSGPDSHDSRNRSGISPIGDKQETSTDGPSKIDSQLIRNTSVFTWKGLTYTVKTPSGDRVLLDHVQGWVKPGMLGALMGSSGAGKTTLLDVLAQRKTEGIIKGSILVDGRDLPVSFQRSAGYCEQLDVHEPLATVREALEFSALLRQSRDTSVENKLKYVDTIIDLLEMHDIENTLIGTTAAGLSVEQRKRLTIGVELVSKPSILIFLDEPTSGLDGQAAFNIVRFLRKLADVGQAVLVTIHQPSASLFAQFDTLLLLAKGGKTVYFGNVGVNGATVNEYFGRNGAPCPQNTNPAEHMIDVVSGSKDWNEVWLASPEYTAMTQELDHLIRDAASKPPATLDDGHEFATPIWTQLKLVTHRNNTSLWRNTNYINNKLMLHITSGLLNGFSFWKIGNTVADLQMHLFTIFNFIFVAPGVIAQLQPLFLERRDIYEAREKKSKMYHWSAFATGLIVSELPYLVVCAVVYYMTWYYTVGFPSGSDKAGAVFFVVLMYEFIYTGIGQAIAAYTPNAIFAVLINPLIIAILVFFCGVYVPYAQIQAVWRYWLYYLDPFNYLMGSLLIFTTFDAPVHCEKEEFAVFNTPDGQTCGEYLAEYMQGLGSRTNLVNPSATRDCKVCQFRTGGDYLYTLNLKDYYYGWRDAGIVALFAISSYAKLRTKASKKAES</sequence>
<organism>
    <name type="scientific">Cordyceps militaris (strain CM01)</name>
    <name type="common">Caterpillar fungus</name>
    <dbReference type="NCBI Taxonomy" id="983644"/>
    <lineage>
        <taxon>Eukaryota</taxon>
        <taxon>Fungi</taxon>
        <taxon>Dikarya</taxon>
        <taxon>Ascomycota</taxon>
        <taxon>Pezizomycotina</taxon>
        <taxon>Sordariomycetes</taxon>
        <taxon>Hypocreomycetidae</taxon>
        <taxon>Hypocreales</taxon>
        <taxon>Cordycipitaceae</taxon>
        <taxon>Cordyceps</taxon>
    </lineage>
</organism>
<comment type="function">
    <text evidence="5 11">ABC-type transporter; part of the gene cluster that mediates the biosynthesis of cordycepin (COR) and pentostatin (PTN), two adenosine analogs with related bioactivity profiles as both mimic adenosine and can inhibit some of the processes that are adenosine dependent (PubMed:29056419, PubMed:37987892). Mediates the pumping of pentostatin but not of cordycepin out of fungal cells (PubMed:29056419). Decreasing intracellular pentostatin releases adenosine deaminase (ADA) inhibition, allowing ADA to deaminate cordycepin into non-toxic 3'-d (PubMed:29056419).</text>
</comment>
<comment type="subcellular location">
    <subcellularLocation>
        <location evidence="16">Cell membrane</location>
        <topology evidence="1">Multi-pass membrane protein</topology>
    </subcellularLocation>
</comment>
<comment type="induction">
    <text evidence="12">Expression remains unchanged during the development of fruiting bodies.</text>
</comment>
<comment type="disruption phenotype">
    <text evidence="5">Does not affect cordycepin production but significantly increases the cellular accumulation of pentostatin.</text>
</comment>
<comment type="biotechnology">
    <text evidence="6 7 8 9 10 13">Cordycepin has antitumor, antibacterial, antifungal, antivirus, and immune regulation properties; thus, cordycepin has important value in commerce, medicine, and scientific research.</text>
</comment>
<comment type="miscellaneous">
    <text evidence="5">Cordycepin and pentostatin biosynthesis coupling is an important point of metabolic regulation where pentostatin safeguards cordycepin from deamination by inhibiting adenosine deaminase (ADA) activity. ADA is not inhibited until cordycepin reaches self-toxic levels, at which point ADA derepression occurs allowing for detoxification of cordycepin to 3'-deoxyinosine.</text>
</comment>
<comment type="similarity">
    <text evidence="15">Belongs to the ABC transporter superfamily. ABCG family. PDR (TC 3.A.1.205) subfamily.</text>
</comment>
<proteinExistence type="evidence at protein level"/>